<accession>O05223</accession>
<reference key="1">
    <citation type="journal article" date="1997" name="Microbiology">
        <title>The Bacillus subtilis genome from gerBC (311 degrees) to licR (334 degrees).</title>
        <authorList>
            <person name="Presecan E."/>
            <person name="Moszer I."/>
            <person name="Boursier L."/>
            <person name="Cruz Ramos H."/>
            <person name="De La Fuente V."/>
            <person name="Hullo M.-F."/>
            <person name="Lelong C."/>
            <person name="Schleich S."/>
            <person name="Sekowska A."/>
            <person name="Song B.H."/>
            <person name="Villani G."/>
            <person name="Kunst F."/>
            <person name="Danchin A."/>
            <person name="Glaser P."/>
        </authorList>
    </citation>
    <scope>NUCLEOTIDE SEQUENCE [GENOMIC DNA]</scope>
    <source>
        <strain>168</strain>
    </source>
</reference>
<reference key="2">
    <citation type="journal article" date="1997" name="Nature">
        <title>The complete genome sequence of the Gram-positive bacterium Bacillus subtilis.</title>
        <authorList>
            <person name="Kunst F."/>
            <person name="Ogasawara N."/>
            <person name="Moszer I."/>
            <person name="Albertini A.M."/>
            <person name="Alloni G."/>
            <person name="Azevedo V."/>
            <person name="Bertero M.G."/>
            <person name="Bessieres P."/>
            <person name="Bolotin A."/>
            <person name="Borchert S."/>
            <person name="Borriss R."/>
            <person name="Boursier L."/>
            <person name="Brans A."/>
            <person name="Braun M."/>
            <person name="Brignell S.C."/>
            <person name="Bron S."/>
            <person name="Brouillet S."/>
            <person name="Bruschi C.V."/>
            <person name="Caldwell B."/>
            <person name="Capuano V."/>
            <person name="Carter N.M."/>
            <person name="Choi S.-K."/>
            <person name="Codani J.-J."/>
            <person name="Connerton I.F."/>
            <person name="Cummings N.J."/>
            <person name="Daniel R.A."/>
            <person name="Denizot F."/>
            <person name="Devine K.M."/>
            <person name="Duesterhoeft A."/>
            <person name="Ehrlich S.D."/>
            <person name="Emmerson P.T."/>
            <person name="Entian K.-D."/>
            <person name="Errington J."/>
            <person name="Fabret C."/>
            <person name="Ferrari E."/>
            <person name="Foulger D."/>
            <person name="Fritz C."/>
            <person name="Fujita M."/>
            <person name="Fujita Y."/>
            <person name="Fuma S."/>
            <person name="Galizzi A."/>
            <person name="Galleron N."/>
            <person name="Ghim S.-Y."/>
            <person name="Glaser P."/>
            <person name="Goffeau A."/>
            <person name="Golightly E.J."/>
            <person name="Grandi G."/>
            <person name="Guiseppi G."/>
            <person name="Guy B.J."/>
            <person name="Haga K."/>
            <person name="Haiech J."/>
            <person name="Harwood C.R."/>
            <person name="Henaut A."/>
            <person name="Hilbert H."/>
            <person name="Holsappel S."/>
            <person name="Hosono S."/>
            <person name="Hullo M.-F."/>
            <person name="Itaya M."/>
            <person name="Jones L.-M."/>
            <person name="Joris B."/>
            <person name="Karamata D."/>
            <person name="Kasahara Y."/>
            <person name="Klaerr-Blanchard M."/>
            <person name="Klein C."/>
            <person name="Kobayashi Y."/>
            <person name="Koetter P."/>
            <person name="Koningstein G."/>
            <person name="Krogh S."/>
            <person name="Kumano M."/>
            <person name="Kurita K."/>
            <person name="Lapidus A."/>
            <person name="Lardinois S."/>
            <person name="Lauber J."/>
            <person name="Lazarevic V."/>
            <person name="Lee S.-M."/>
            <person name="Levine A."/>
            <person name="Liu H."/>
            <person name="Masuda S."/>
            <person name="Mauel C."/>
            <person name="Medigue C."/>
            <person name="Medina N."/>
            <person name="Mellado R.P."/>
            <person name="Mizuno M."/>
            <person name="Moestl D."/>
            <person name="Nakai S."/>
            <person name="Noback M."/>
            <person name="Noone D."/>
            <person name="O'Reilly M."/>
            <person name="Ogawa K."/>
            <person name="Ogiwara A."/>
            <person name="Oudega B."/>
            <person name="Park S.-H."/>
            <person name="Parro V."/>
            <person name="Pohl T.M."/>
            <person name="Portetelle D."/>
            <person name="Porwollik S."/>
            <person name="Prescott A.M."/>
            <person name="Presecan E."/>
            <person name="Pujic P."/>
            <person name="Purnelle B."/>
            <person name="Rapoport G."/>
            <person name="Rey M."/>
            <person name="Reynolds S."/>
            <person name="Rieger M."/>
            <person name="Rivolta C."/>
            <person name="Rocha E."/>
            <person name="Roche B."/>
            <person name="Rose M."/>
            <person name="Sadaie Y."/>
            <person name="Sato T."/>
            <person name="Scanlan E."/>
            <person name="Schleich S."/>
            <person name="Schroeter R."/>
            <person name="Scoffone F."/>
            <person name="Sekiguchi J."/>
            <person name="Sekowska A."/>
            <person name="Seror S.J."/>
            <person name="Serror P."/>
            <person name="Shin B.-S."/>
            <person name="Soldo B."/>
            <person name="Sorokin A."/>
            <person name="Tacconi E."/>
            <person name="Takagi T."/>
            <person name="Takahashi H."/>
            <person name="Takemaru K."/>
            <person name="Takeuchi M."/>
            <person name="Tamakoshi A."/>
            <person name="Tanaka T."/>
            <person name="Terpstra P."/>
            <person name="Tognoni A."/>
            <person name="Tosato V."/>
            <person name="Uchiyama S."/>
            <person name="Vandenbol M."/>
            <person name="Vannier F."/>
            <person name="Vassarotti A."/>
            <person name="Viari A."/>
            <person name="Wambutt R."/>
            <person name="Wedler E."/>
            <person name="Wedler H."/>
            <person name="Weitzenegger T."/>
            <person name="Winters P."/>
            <person name="Wipat A."/>
            <person name="Yamamoto H."/>
            <person name="Yamane K."/>
            <person name="Yasumoto K."/>
            <person name="Yata K."/>
            <person name="Yoshida K."/>
            <person name="Yoshikawa H.-F."/>
            <person name="Zumstein E."/>
            <person name="Yoshikawa H."/>
            <person name="Danchin A."/>
        </authorList>
    </citation>
    <scope>NUCLEOTIDE SEQUENCE [LARGE SCALE GENOMIC DNA]</scope>
    <source>
        <strain>168</strain>
    </source>
</reference>
<dbReference type="EMBL" id="Z93767">
    <property type="protein sequence ID" value="CAB07800.1"/>
    <property type="molecule type" value="Genomic_DNA"/>
</dbReference>
<dbReference type="EMBL" id="AL009126">
    <property type="protein sequence ID" value="CAB15621.1"/>
    <property type="molecule type" value="Genomic_DNA"/>
</dbReference>
<dbReference type="PIR" id="A70069">
    <property type="entry name" value="A70069"/>
</dbReference>
<dbReference type="RefSeq" id="NP_391485.1">
    <property type="nucleotide sequence ID" value="NC_000964.3"/>
</dbReference>
<dbReference type="RefSeq" id="WP_003242695.1">
    <property type="nucleotide sequence ID" value="NZ_OZ025638.1"/>
</dbReference>
<dbReference type="SMR" id="O05223"/>
<dbReference type="FunCoup" id="O05223">
    <property type="interactions" value="133"/>
</dbReference>
<dbReference type="STRING" id="224308.BSU36040"/>
<dbReference type="PaxDb" id="224308-BSU36040"/>
<dbReference type="EnsemblBacteria" id="CAB15621">
    <property type="protein sequence ID" value="CAB15621"/>
    <property type="gene ID" value="BSU_36040"/>
</dbReference>
<dbReference type="GeneID" id="936867"/>
<dbReference type="KEGG" id="bsu:BSU36040"/>
<dbReference type="PATRIC" id="fig|224308.179.peg.3901"/>
<dbReference type="eggNOG" id="ENOG503044I">
    <property type="taxonomic scope" value="Bacteria"/>
</dbReference>
<dbReference type="InParanoid" id="O05223"/>
<dbReference type="OrthoDB" id="2716151at2"/>
<dbReference type="BioCyc" id="BSUB:BSU36040-MONOMER"/>
<dbReference type="Proteomes" id="UP000001570">
    <property type="component" value="Chromosome"/>
</dbReference>
<gene>
    <name type="primary">ywrJ</name>
    <name type="ordered locus">BSU36040</name>
</gene>
<feature type="chain" id="PRO_0000049996" description="Uncharacterized protein YwrJ">
    <location>
        <begin position="1"/>
        <end position="225"/>
    </location>
</feature>
<protein>
    <recommendedName>
        <fullName>Uncharacterized protein YwrJ</fullName>
    </recommendedName>
</protein>
<keyword id="KW-1185">Reference proteome</keyword>
<sequence>MKGLNQFLNTDVEVVISGDTRFVGTLIDIGQDIFVIFDGCNYLYIPLLHLHQINKAKIVTSTEKPFLINPEDPMIEAETQAFSYRNTLNKVKGQFIEVYVTGGRSIHGYVTNVLNDYIVFFSPVFKILFISMHHLKWFTPYSTEQTPYTLDNSQLPVVPSKVPLVRNFEEQIKKNIGELVIFDMGEVPEKVGLLKGVSNNIIELINASGEPVIWKLNHLKTMHLP</sequence>
<organism>
    <name type="scientific">Bacillus subtilis (strain 168)</name>
    <dbReference type="NCBI Taxonomy" id="224308"/>
    <lineage>
        <taxon>Bacteria</taxon>
        <taxon>Bacillati</taxon>
        <taxon>Bacillota</taxon>
        <taxon>Bacilli</taxon>
        <taxon>Bacillales</taxon>
        <taxon>Bacillaceae</taxon>
        <taxon>Bacillus</taxon>
    </lineage>
</organism>
<name>YWRJ_BACSU</name>
<proteinExistence type="predicted"/>